<gene>
    <name type="ordered locus">BBta_0248</name>
</gene>
<dbReference type="EC" id="4.2.1.96" evidence="1"/>
<dbReference type="EMBL" id="CP000494">
    <property type="protein sequence ID" value="ABQ32543.1"/>
    <property type="molecule type" value="Genomic_DNA"/>
</dbReference>
<dbReference type="RefSeq" id="WP_012040600.1">
    <property type="nucleotide sequence ID" value="NC_009485.1"/>
</dbReference>
<dbReference type="SMR" id="A5E8P9"/>
<dbReference type="STRING" id="288000.BBta_0248"/>
<dbReference type="KEGG" id="bbt:BBta_0248"/>
<dbReference type="eggNOG" id="COG2154">
    <property type="taxonomic scope" value="Bacteria"/>
</dbReference>
<dbReference type="HOGENOM" id="CLU_081974_3_2_5"/>
<dbReference type="OrthoDB" id="9794987at2"/>
<dbReference type="Proteomes" id="UP000000246">
    <property type="component" value="Chromosome"/>
</dbReference>
<dbReference type="GO" id="GO:0008124">
    <property type="term" value="F:4-alpha-hydroxytetrahydrobiopterin dehydratase activity"/>
    <property type="evidence" value="ECO:0007669"/>
    <property type="project" value="UniProtKB-UniRule"/>
</dbReference>
<dbReference type="GO" id="GO:0006729">
    <property type="term" value="P:tetrahydrobiopterin biosynthetic process"/>
    <property type="evidence" value="ECO:0007669"/>
    <property type="project" value="InterPro"/>
</dbReference>
<dbReference type="CDD" id="cd00914">
    <property type="entry name" value="PCD_DCoH_subfamily_b"/>
    <property type="match status" value="1"/>
</dbReference>
<dbReference type="Gene3D" id="3.30.1360.20">
    <property type="entry name" value="Transcriptional coactivator/pterin dehydratase"/>
    <property type="match status" value="1"/>
</dbReference>
<dbReference type="HAMAP" id="MF_00434">
    <property type="entry name" value="Pterin_4_alpha"/>
    <property type="match status" value="1"/>
</dbReference>
<dbReference type="InterPro" id="IPR036428">
    <property type="entry name" value="PCD_sf"/>
</dbReference>
<dbReference type="InterPro" id="IPR001533">
    <property type="entry name" value="Pterin_deHydtase"/>
</dbReference>
<dbReference type="NCBIfam" id="NF002017">
    <property type="entry name" value="PRK00823.1-2"/>
    <property type="match status" value="1"/>
</dbReference>
<dbReference type="NCBIfam" id="NF002018">
    <property type="entry name" value="PRK00823.1-3"/>
    <property type="match status" value="1"/>
</dbReference>
<dbReference type="NCBIfam" id="NF002020">
    <property type="entry name" value="PRK00823.1-5"/>
    <property type="match status" value="1"/>
</dbReference>
<dbReference type="PANTHER" id="PTHR12599">
    <property type="entry name" value="PTERIN-4-ALPHA-CARBINOLAMINE DEHYDRATASE"/>
    <property type="match status" value="1"/>
</dbReference>
<dbReference type="PANTHER" id="PTHR12599:SF0">
    <property type="entry name" value="PTERIN-4-ALPHA-CARBINOLAMINE DEHYDRATASE"/>
    <property type="match status" value="1"/>
</dbReference>
<dbReference type="Pfam" id="PF01329">
    <property type="entry name" value="Pterin_4a"/>
    <property type="match status" value="1"/>
</dbReference>
<dbReference type="SUPFAM" id="SSF55248">
    <property type="entry name" value="PCD-like"/>
    <property type="match status" value="1"/>
</dbReference>
<protein>
    <recommendedName>
        <fullName evidence="1">Putative pterin-4-alpha-carbinolamine dehydratase</fullName>
        <shortName evidence="1">PHS</shortName>
        <ecNumber evidence="1">4.2.1.96</ecNumber>
    </recommendedName>
    <alternativeName>
        <fullName evidence="1">4-alpha-hydroxy-tetrahydropterin dehydratase</fullName>
    </alternativeName>
    <alternativeName>
        <fullName evidence="1">Pterin carbinolamine dehydratase</fullName>
        <shortName evidence="1">PCD</shortName>
    </alternativeName>
</protein>
<keyword id="KW-0456">Lyase</keyword>
<keyword id="KW-1185">Reference proteome</keyword>
<name>PHS_BRASB</name>
<organism>
    <name type="scientific">Bradyrhizobium sp. (strain BTAi1 / ATCC BAA-1182)</name>
    <dbReference type="NCBI Taxonomy" id="288000"/>
    <lineage>
        <taxon>Bacteria</taxon>
        <taxon>Pseudomonadati</taxon>
        <taxon>Pseudomonadota</taxon>
        <taxon>Alphaproteobacteria</taxon>
        <taxon>Hyphomicrobiales</taxon>
        <taxon>Nitrobacteraceae</taxon>
        <taxon>Bradyrhizobium</taxon>
    </lineage>
</organism>
<accession>A5E8P9</accession>
<evidence type="ECO:0000255" key="1">
    <source>
        <dbReference type="HAMAP-Rule" id="MF_00434"/>
    </source>
</evidence>
<feature type="chain" id="PRO_1000050407" description="Putative pterin-4-alpha-carbinolamine dehydratase">
    <location>
        <begin position="1"/>
        <end position="99"/>
    </location>
</feature>
<reference key="1">
    <citation type="journal article" date="2007" name="Science">
        <title>Legumes symbioses: absence of nod genes in photosynthetic bradyrhizobia.</title>
        <authorList>
            <person name="Giraud E."/>
            <person name="Moulin L."/>
            <person name="Vallenet D."/>
            <person name="Barbe V."/>
            <person name="Cytryn E."/>
            <person name="Avarre J.-C."/>
            <person name="Jaubert M."/>
            <person name="Simon D."/>
            <person name="Cartieaux F."/>
            <person name="Prin Y."/>
            <person name="Bena G."/>
            <person name="Hannibal L."/>
            <person name="Fardoux J."/>
            <person name="Kojadinovic M."/>
            <person name="Vuillet L."/>
            <person name="Lajus A."/>
            <person name="Cruveiller S."/>
            <person name="Rouy Z."/>
            <person name="Mangenot S."/>
            <person name="Segurens B."/>
            <person name="Dossat C."/>
            <person name="Franck W.L."/>
            <person name="Chang W.-S."/>
            <person name="Saunders E."/>
            <person name="Bruce D."/>
            <person name="Richardson P."/>
            <person name="Normand P."/>
            <person name="Dreyfus B."/>
            <person name="Pignol D."/>
            <person name="Stacey G."/>
            <person name="Emerich D."/>
            <person name="Vermeglio A."/>
            <person name="Medigue C."/>
            <person name="Sadowsky M."/>
        </authorList>
    </citation>
    <scope>NUCLEOTIDE SEQUENCE [LARGE SCALE GENOMIC DNA]</scope>
    <source>
        <strain>BTAi1 / ATCC BAA-1182</strain>
    </source>
</reference>
<comment type="catalytic activity">
    <reaction evidence="1">
        <text>(4aS,6R)-4a-hydroxy-L-erythro-5,6,7,8-tetrahydrobiopterin = (6R)-L-erythro-6,7-dihydrobiopterin + H2O</text>
        <dbReference type="Rhea" id="RHEA:11920"/>
        <dbReference type="ChEBI" id="CHEBI:15377"/>
        <dbReference type="ChEBI" id="CHEBI:15642"/>
        <dbReference type="ChEBI" id="CHEBI:43120"/>
        <dbReference type="EC" id="4.2.1.96"/>
    </reaction>
</comment>
<comment type="similarity">
    <text evidence="1">Belongs to the pterin-4-alpha-carbinolamine dehydratase family.</text>
</comment>
<proteinExistence type="inferred from homology"/>
<sequence length="99" mass="11071">MVERLSAEARTDALRKLSGWSELDGRDAISRSFTFRDFNEAFGFMTRVALVAEKRDHHPEWRNVYRTVDVVLSTHDAGGVTLLDVELAEAMDAIAASMA</sequence>